<reference key="1">
    <citation type="journal article" date="2001" name="Lancet">
        <title>Whole genome sequencing of meticillin-resistant Staphylococcus aureus.</title>
        <authorList>
            <person name="Kuroda M."/>
            <person name="Ohta T."/>
            <person name="Uchiyama I."/>
            <person name="Baba T."/>
            <person name="Yuzawa H."/>
            <person name="Kobayashi I."/>
            <person name="Cui L."/>
            <person name="Oguchi A."/>
            <person name="Aoki K."/>
            <person name="Nagai Y."/>
            <person name="Lian J.-Q."/>
            <person name="Ito T."/>
            <person name="Kanamori M."/>
            <person name="Matsumaru H."/>
            <person name="Maruyama A."/>
            <person name="Murakami H."/>
            <person name="Hosoyama A."/>
            <person name="Mizutani-Ui Y."/>
            <person name="Takahashi N.K."/>
            <person name="Sawano T."/>
            <person name="Inoue R."/>
            <person name="Kaito C."/>
            <person name="Sekimizu K."/>
            <person name="Hirakawa H."/>
            <person name="Kuhara S."/>
            <person name="Goto S."/>
            <person name="Yabuzaki J."/>
            <person name="Kanehisa M."/>
            <person name="Yamashita A."/>
            <person name="Oshima K."/>
            <person name="Furuya K."/>
            <person name="Yoshino C."/>
            <person name="Shiba T."/>
            <person name="Hattori M."/>
            <person name="Ogasawara N."/>
            <person name="Hayashi H."/>
            <person name="Hiramatsu K."/>
        </authorList>
    </citation>
    <scope>NUCLEOTIDE SEQUENCE [LARGE SCALE GENOMIC DNA]</scope>
    <source>
        <strain>N315</strain>
    </source>
</reference>
<reference key="2">
    <citation type="journal article" date="2005" name="J. Microbiol. Methods">
        <title>Correlation of proteomic and transcriptomic profiles of Staphylococcus aureus during the post-exponential phase of growth.</title>
        <authorList>
            <person name="Scherl A."/>
            <person name="Francois P."/>
            <person name="Bento M."/>
            <person name="Deshusses J.M."/>
            <person name="Charbonnier Y."/>
            <person name="Converset V."/>
            <person name="Huyghe A."/>
            <person name="Walter N."/>
            <person name="Hoogland C."/>
            <person name="Appel R.D."/>
            <person name="Sanchez J.-C."/>
            <person name="Zimmermann-Ivol C.G."/>
            <person name="Corthals G.L."/>
            <person name="Hochstrasser D.F."/>
            <person name="Schrenzel J."/>
        </authorList>
    </citation>
    <scope>IDENTIFICATION BY MASS SPECTROMETRY</scope>
    <source>
        <strain>N315</strain>
    </source>
</reference>
<reference key="3">
    <citation type="submission" date="2007-10" db="UniProtKB">
        <title>Shotgun proteomic analysis of total and membrane protein extracts of S. aureus strain N315.</title>
        <authorList>
            <person name="Vaezzadeh A.R."/>
            <person name="Deshusses J."/>
            <person name="Lescuyer P."/>
            <person name="Hochstrasser D.F."/>
        </authorList>
    </citation>
    <scope>IDENTIFICATION BY MASS SPECTROMETRY [LARGE SCALE ANALYSIS]</scope>
    <source>
        <strain>N315</strain>
    </source>
</reference>
<protein>
    <recommendedName>
        <fullName>Dihydrofolate reductase</fullName>
        <shortName>DHFR</shortName>
        <ecNumber>1.5.1.3</ecNumber>
    </recommendedName>
</protein>
<comment type="function">
    <text evidence="1">Key enzyme in folate metabolism. Catalyzes an essential reaction for de novo glycine and purine synthesis, and for DNA precursor synthesis (By similarity).</text>
</comment>
<comment type="catalytic activity">
    <reaction evidence="2">
        <text>(6S)-5,6,7,8-tetrahydrofolate + NADP(+) = 7,8-dihydrofolate + NADPH + H(+)</text>
        <dbReference type="Rhea" id="RHEA:15009"/>
        <dbReference type="ChEBI" id="CHEBI:15378"/>
        <dbReference type="ChEBI" id="CHEBI:57451"/>
        <dbReference type="ChEBI" id="CHEBI:57453"/>
        <dbReference type="ChEBI" id="CHEBI:57783"/>
        <dbReference type="ChEBI" id="CHEBI:58349"/>
        <dbReference type="EC" id="1.5.1.3"/>
    </reaction>
</comment>
<comment type="pathway">
    <text>Cofactor biosynthesis; tetrahydrofolate biosynthesis; 5,6,7,8-tetrahydrofolate from 7,8-dihydrofolate: step 1/1.</text>
</comment>
<comment type="similarity">
    <text evidence="3">Belongs to the dihydrofolate reductase family.</text>
</comment>
<gene>
    <name type="primary">folA</name>
    <name type="ordered locus">SA1259</name>
</gene>
<sequence length="159" mass="18251">MTLSILVAHDLQRVIGFENQLPWHLPNDLKHVKKLSTGHTLVMGRKTFESIGKPLPNRRNVVLTSDTSFNVEGVDVIHSIEDIYQLPGHVFIFGGQTLFEEMIDKVDDMYITVIEGKFRGDTFFPPYTFEDWEVASSVEGKLDEKNTIPHTFLHLIRKK</sequence>
<proteinExistence type="evidence at protein level"/>
<feature type="initiator methionine" description="Removed" evidence="1">
    <location>
        <position position="1"/>
    </location>
</feature>
<feature type="chain" id="PRO_0000186408" description="Dihydrofolate reductase">
    <location>
        <begin position="2"/>
        <end position="159"/>
    </location>
</feature>
<feature type="domain" description="DHFR" evidence="2">
    <location>
        <begin position="2"/>
        <end position="157"/>
    </location>
</feature>
<feature type="binding site" evidence="1">
    <location>
        <begin position="6"/>
        <end position="8"/>
    </location>
    <ligand>
        <name>substrate</name>
    </ligand>
</feature>
<feature type="binding site" evidence="1">
    <location>
        <begin position="7"/>
        <end position="8"/>
    </location>
    <ligand>
        <name>NADP(+)</name>
        <dbReference type="ChEBI" id="CHEBI:58349"/>
    </ligand>
</feature>
<feature type="binding site" evidence="1">
    <location>
        <begin position="15"/>
        <end position="20"/>
    </location>
    <ligand>
        <name>NADP(+)</name>
        <dbReference type="ChEBI" id="CHEBI:58349"/>
    </ligand>
</feature>
<feature type="binding site" evidence="1">
    <location>
        <position position="28"/>
    </location>
    <ligand>
        <name>substrate</name>
    </ligand>
</feature>
<feature type="binding site" evidence="1">
    <location>
        <begin position="44"/>
        <end position="47"/>
    </location>
    <ligand>
        <name>NADP(+)</name>
        <dbReference type="ChEBI" id="CHEBI:58349"/>
    </ligand>
</feature>
<feature type="binding site" evidence="1">
    <location>
        <position position="58"/>
    </location>
    <ligand>
        <name>substrate</name>
    </ligand>
</feature>
<feature type="binding site" evidence="1">
    <location>
        <begin position="63"/>
        <end position="66"/>
    </location>
    <ligand>
        <name>NADP(+)</name>
        <dbReference type="ChEBI" id="CHEBI:58349"/>
    </ligand>
</feature>
<feature type="binding site" evidence="1">
    <location>
        <begin position="93"/>
        <end position="98"/>
    </location>
    <ligand>
        <name>NADP(+)</name>
        <dbReference type="ChEBI" id="CHEBI:58349"/>
    </ligand>
</feature>
<feature type="binding site" evidence="1">
    <location>
        <position position="112"/>
    </location>
    <ligand>
        <name>substrate</name>
    </ligand>
</feature>
<accession>P99079</accession>
<accession>P10167</accession>
<evidence type="ECO:0000250" key="1"/>
<evidence type="ECO:0000255" key="2">
    <source>
        <dbReference type="PROSITE-ProRule" id="PRU00660"/>
    </source>
</evidence>
<evidence type="ECO:0000305" key="3"/>
<keyword id="KW-0521">NADP</keyword>
<keyword id="KW-0554">One-carbon metabolism</keyword>
<keyword id="KW-0560">Oxidoreductase</keyword>
<organism>
    <name type="scientific">Staphylococcus aureus (strain N315)</name>
    <dbReference type="NCBI Taxonomy" id="158879"/>
    <lineage>
        <taxon>Bacteria</taxon>
        <taxon>Bacillati</taxon>
        <taxon>Bacillota</taxon>
        <taxon>Bacilli</taxon>
        <taxon>Bacillales</taxon>
        <taxon>Staphylococcaceae</taxon>
        <taxon>Staphylococcus</taxon>
    </lineage>
</organism>
<dbReference type="EC" id="1.5.1.3"/>
<dbReference type="EMBL" id="BA000018">
    <property type="protein sequence ID" value="BAB42519.1"/>
    <property type="molecule type" value="Genomic_DNA"/>
</dbReference>
<dbReference type="RefSeq" id="WP_000175746.1">
    <property type="nucleotide sequence ID" value="NC_002745.2"/>
</dbReference>
<dbReference type="BMRB" id="P99079"/>
<dbReference type="SMR" id="P99079"/>
<dbReference type="EnsemblBacteria" id="BAB42519">
    <property type="protein sequence ID" value="BAB42519"/>
    <property type="gene ID" value="BAB42519"/>
</dbReference>
<dbReference type="KEGG" id="sau:SA1259"/>
<dbReference type="HOGENOM" id="CLU_043966_5_1_9"/>
<dbReference type="UniPathway" id="UPA00077">
    <property type="reaction ID" value="UER00158"/>
</dbReference>
<dbReference type="GO" id="GO:0005829">
    <property type="term" value="C:cytosol"/>
    <property type="evidence" value="ECO:0007669"/>
    <property type="project" value="TreeGrafter"/>
</dbReference>
<dbReference type="GO" id="GO:0004146">
    <property type="term" value="F:dihydrofolate reductase activity"/>
    <property type="evidence" value="ECO:0007669"/>
    <property type="project" value="UniProtKB-EC"/>
</dbReference>
<dbReference type="GO" id="GO:0050661">
    <property type="term" value="F:NADP binding"/>
    <property type="evidence" value="ECO:0007669"/>
    <property type="project" value="InterPro"/>
</dbReference>
<dbReference type="GO" id="GO:0046452">
    <property type="term" value="P:dihydrofolate metabolic process"/>
    <property type="evidence" value="ECO:0007669"/>
    <property type="project" value="TreeGrafter"/>
</dbReference>
<dbReference type="GO" id="GO:0046655">
    <property type="term" value="P:folic acid metabolic process"/>
    <property type="evidence" value="ECO:0007669"/>
    <property type="project" value="TreeGrafter"/>
</dbReference>
<dbReference type="GO" id="GO:0006730">
    <property type="term" value="P:one-carbon metabolic process"/>
    <property type="evidence" value="ECO:0007669"/>
    <property type="project" value="UniProtKB-KW"/>
</dbReference>
<dbReference type="GO" id="GO:0046654">
    <property type="term" value="P:tetrahydrofolate biosynthetic process"/>
    <property type="evidence" value="ECO:0007669"/>
    <property type="project" value="UniProtKB-UniPathway"/>
</dbReference>
<dbReference type="CDD" id="cd00209">
    <property type="entry name" value="DHFR"/>
    <property type="match status" value="1"/>
</dbReference>
<dbReference type="FunFam" id="3.40.430.10:FF:000001">
    <property type="entry name" value="Dihydrofolate reductase"/>
    <property type="match status" value="1"/>
</dbReference>
<dbReference type="Gene3D" id="3.40.430.10">
    <property type="entry name" value="Dihydrofolate Reductase, subunit A"/>
    <property type="match status" value="1"/>
</dbReference>
<dbReference type="InterPro" id="IPR012259">
    <property type="entry name" value="DHFR"/>
</dbReference>
<dbReference type="InterPro" id="IPR024072">
    <property type="entry name" value="DHFR-like_dom_sf"/>
</dbReference>
<dbReference type="InterPro" id="IPR017925">
    <property type="entry name" value="DHFR_CS"/>
</dbReference>
<dbReference type="InterPro" id="IPR001796">
    <property type="entry name" value="DHFR_dom"/>
</dbReference>
<dbReference type="PANTHER" id="PTHR48069">
    <property type="entry name" value="DIHYDROFOLATE REDUCTASE"/>
    <property type="match status" value="1"/>
</dbReference>
<dbReference type="PANTHER" id="PTHR48069:SF3">
    <property type="entry name" value="DIHYDROFOLATE REDUCTASE"/>
    <property type="match status" value="1"/>
</dbReference>
<dbReference type="Pfam" id="PF00186">
    <property type="entry name" value="DHFR_1"/>
    <property type="match status" value="1"/>
</dbReference>
<dbReference type="PIRSF" id="PIRSF000194">
    <property type="entry name" value="DHFR"/>
    <property type="match status" value="1"/>
</dbReference>
<dbReference type="PRINTS" id="PR00070">
    <property type="entry name" value="DHFR"/>
</dbReference>
<dbReference type="SUPFAM" id="SSF53597">
    <property type="entry name" value="Dihydrofolate reductase-like"/>
    <property type="match status" value="1"/>
</dbReference>
<dbReference type="PROSITE" id="PS00075">
    <property type="entry name" value="DHFR_1"/>
    <property type="match status" value="1"/>
</dbReference>
<dbReference type="PROSITE" id="PS51330">
    <property type="entry name" value="DHFR_2"/>
    <property type="match status" value="1"/>
</dbReference>
<name>DYR_STAAN</name>